<feature type="chain" id="PRO_1000081880" description="Large ribosomal subunit protein bL27">
    <location>
        <begin position="1"/>
        <end position="84"/>
    </location>
</feature>
<feature type="region of interest" description="Disordered" evidence="2">
    <location>
        <begin position="1"/>
        <end position="21"/>
    </location>
</feature>
<feature type="compositionally biased region" description="Polar residues" evidence="2">
    <location>
        <begin position="7"/>
        <end position="19"/>
    </location>
</feature>
<sequence>MAHKKGASSTRNGRDSNAQRLGVKRFGGQVVGAGEIIVRQRGTHFHPGVNVGRGGDDTLFALSAGSVEFGVKGGRKVVNIVVPA</sequence>
<gene>
    <name evidence="1" type="primary">rpmA</name>
    <name type="ordered locus">CMS1815</name>
</gene>
<reference key="1">
    <citation type="journal article" date="2008" name="J. Bacteriol.">
        <title>Genome of the actinomycete plant pathogen Clavibacter michiganensis subsp. sepedonicus suggests recent niche adaptation.</title>
        <authorList>
            <person name="Bentley S.D."/>
            <person name="Corton C."/>
            <person name="Brown S.E."/>
            <person name="Barron A."/>
            <person name="Clark L."/>
            <person name="Doggett J."/>
            <person name="Harris B."/>
            <person name="Ormond D."/>
            <person name="Quail M.A."/>
            <person name="May G."/>
            <person name="Francis D."/>
            <person name="Knudson D."/>
            <person name="Parkhill J."/>
            <person name="Ishimaru C.A."/>
        </authorList>
    </citation>
    <scope>NUCLEOTIDE SEQUENCE [LARGE SCALE GENOMIC DNA]</scope>
    <source>
        <strain>ATCC 33113 / DSM 20744 / JCM 9667 / LMG 2889 / ICMP 2535 / C-1</strain>
    </source>
</reference>
<dbReference type="EMBL" id="AM849034">
    <property type="protein sequence ID" value="CAQ01920.1"/>
    <property type="molecule type" value="Genomic_DNA"/>
</dbReference>
<dbReference type="RefSeq" id="WP_012299161.1">
    <property type="nucleotide sequence ID" value="NZ_MZMN01000003.1"/>
</dbReference>
<dbReference type="SMR" id="B0RDG4"/>
<dbReference type="STRING" id="31964.CMS1815"/>
<dbReference type="GeneID" id="92983254"/>
<dbReference type="KEGG" id="cms:CMS1815"/>
<dbReference type="eggNOG" id="COG0211">
    <property type="taxonomic scope" value="Bacteria"/>
</dbReference>
<dbReference type="HOGENOM" id="CLU_095424_4_0_11"/>
<dbReference type="OrthoDB" id="9803474at2"/>
<dbReference type="Proteomes" id="UP000001318">
    <property type="component" value="Chromosome"/>
</dbReference>
<dbReference type="GO" id="GO:0022625">
    <property type="term" value="C:cytosolic large ribosomal subunit"/>
    <property type="evidence" value="ECO:0007669"/>
    <property type="project" value="TreeGrafter"/>
</dbReference>
<dbReference type="GO" id="GO:0003735">
    <property type="term" value="F:structural constituent of ribosome"/>
    <property type="evidence" value="ECO:0007669"/>
    <property type="project" value="InterPro"/>
</dbReference>
<dbReference type="GO" id="GO:0006412">
    <property type="term" value="P:translation"/>
    <property type="evidence" value="ECO:0007669"/>
    <property type="project" value="UniProtKB-UniRule"/>
</dbReference>
<dbReference type="FunFam" id="2.40.50.100:FF:000020">
    <property type="entry name" value="50S ribosomal protein L27"/>
    <property type="match status" value="1"/>
</dbReference>
<dbReference type="Gene3D" id="2.40.50.100">
    <property type="match status" value="1"/>
</dbReference>
<dbReference type="HAMAP" id="MF_00539">
    <property type="entry name" value="Ribosomal_bL27"/>
    <property type="match status" value="1"/>
</dbReference>
<dbReference type="InterPro" id="IPR001684">
    <property type="entry name" value="Ribosomal_bL27"/>
</dbReference>
<dbReference type="InterPro" id="IPR018261">
    <property type="entry name" value="Ribosomal_bL27_CS"/>
</dbReference>
<dbReference type="NCBIfam" id="TIGR00062">
    <property type="entry name" value="L27"/>
    <property type="match status" value="1"/>
</dbReference>
<dbReference type="PANTHER" id="PTHR15893:SF0">
    <property type="entry name" value="LARGE RIBOSOMAL SUBUNIT PROTEIN BL27M"/>
    <property type="match status" value="1"/>
</dbReference>
<dbReference type="PANTHER" id="PTHR15893">
    <property type="entry name" value="RIBOSOMAL PROTEIN L27"/>
    <property type="match status" value="1"/>
</dbReference>
<dbReference type="Pfam" id="PF01016">
    <property type="entry name" value="Ribosomal_L27"/>
    <property type="match status" value="1"/>
</dbReference>
<dbReference type="PRINTS" id="PR00063">
    <property type="entry name" value="RIBOSOMALL27"/>
</dbReference>
<dbReference type="SUPFAM" id="SSF110324">
    <property type="entry name" value="Ribosomal L27 protein-like"/>
    <property type="match status" value="1"/>
</dbReference>
<dbReference type="PROSITE" id="PS00831">
    <property type="entry name" value="RIBOSOMAL_L27"/>
    <property type="match status" value="1"/>
</dbReference>
<proteinExistence type="inferred from homology"/>
<comment type="similarity">
    <text evidence="1">Belongs to the bacterial ribosomal protein bL27 family.</text>
</comment>
<protein>
    <recommendedName>
        <fullName evidence="1">Large ribosomal subunit protein bL27</fullName>
    </recommendedName>
    <alternativeName>
        <fullName evidence="3">50S ribosomal protein L27</fullName>
    </alternativeName>
</protein>
<organism>
    <name type="scientific">Clavibacter sepedonicus</name>
    <name type="common">Clavibacter michiganensis subsp. sepedonicus</name>
    <dbReference type="NCBI Taxonomy" id="31964"/>
    <lineage>
        <taxon>Bacteria</taxon>
        <taxon>Bacillati</taxon>
        <taxon>Actinomycetota</taxon>
        <taxon>Actinomycetes</taxon>
        <taxon>Micrococcales</taxon>
        <taxon>Microbacteriaceae</taxon>
        <taxon>Clavibacter</taxon>
    </lineage>
</organism>
<evidence type="ECO:0000255" key="1">
    <source>
        <dbReference type="HAMAP-Rule" id="MF_00539"/>
    </source>
</evidence>
<evidence type="ECO:0000256" key="2">
    <source>
        <dbReference type="SAM" id="MobiDB-lite"/>
    </source>
</evidence>
<evidence type="ECO:0000305" key="3"/>
<keyword id="KW-0687">Ribonucleoprotein</keyword>
<keyword id="KW-0689">Ribosomal protein</keyword>
<name>RL27_CLASE</name>
<accession>B0RDG4</accession>